<proteinExistence type="evidence at transcript level"/>
<reference key="1">
    <citation type="submission" date="2003-12" db="EMBL/GenBank/DDBJ databases">
        <title>Sequence analysis of rainbow trout (Oncorhynchus mykiss) genes modulated by bacterial infection.</title>
        <authorList>
            <person name="Wang T."/>
            <person name="Secombes C.J."/>
        </authorList>
    </citation>
    <scope>NUCLEOTIDE SEQUENCE [MRNA]</scope>
</reference>
<keyword id="KW-1003">Cell membrane</keyword>
<keyword id="KW-0145">Chemotaxis</keyword>
<keyword id="KW-1015">Disulfide bond</keyword>
<keyword id="KW-0297">G-protein coupled receptor</keyword>
<keyword id="KW-0325">Glycoprotein</keyword>
<keyword id="KW-0472">Membrane</keyword>
<keyword id="KW-0675">Receptor</keyword>
<keyword id="KW-0807">Transducer</keyword>
<keyword id="KW-0812">Transmembrane</keyword>
<keyword id="KW-1133">Transmembrane helix</keyword>
<evidence type="ECO:0000250" key="1"/>
<evidence type="ECO:0000255" key="2"/>
<evidence type="ECO:0000255" key="3">
    <source>
        <dbReference type="PROSITE-ProRule" id="PRU00521"/>
    </source>
</evidence>
<evidence type="ECO:0000305" key="4"/>
<comment type="function">
    <text evidence="1">Receptor for the chemotactic and inflammatory peptide anaphylatoxin C3a. This receptor stimulates chemotaxis, granule enzyme release and superoxide anion production (By similarity).</text>
</comment>
<comment type="subcellular location">
    <subcellularLocation>
        <location evidence="1">Cell membrane</location>
        <topology evidence="1">Multi-pass membrane protein</topology>
    </subcellularLocation>
</comment>
<comment type="similarity">
    <text evidence="3">Belongs to the G-protein coupled receptor 1 family.</text>
</comment>
<comment type="caution">
    <text evidence="4">Lacks an insertion found in the C3ar family. It remains uncertain whether it belongs to the C3ar or the C5ar family.</text>
</comment>
<protein>
    <recommendedName>
        <fullName>C3a anaphylatoxin chemotactic receptor</fullName>
        <shortName>C3AR</shortName>
        <shortName>C3a-R</shortName>
    </recommendedName>
</protein>
<name>C3AR_ONCMY</name>
<dbReference type="EMBL" id="AJ616902">
    <property type="protein sequence ID" value="CAE83615.1"/>
    <property type="molecule type" value="mRNA"/>
</dbReference>
<dbReference type="RefSeq" id="NP_001117875.1">
    <property type="nucleotide sequence ID" value="NM_001124403.2"/>
</dbReference>
<dbReference type="SMR" id="Q2WED0"/>
<dbReference type="GlyCosmos" id="Q2WED0">
    <property type="glycosylation" value="2 sites, No reported glycans"/>
</dbReference>
<dbReference type="Ensembl" id="ENSOMYT00000079038.2">
    <property type="protein sequence ID" value="ENSOMYP00000072576.2"/>
    <property type="gene ID" value="ENSOMYG00000033575.2"/>
</dbReference>
<dbReference type="GeneID" id="100136104"/>
<dbReference type="KEGG" id="omy:100136104"/>
<dbReference type="CTD" id="719"/>
<dbReference type="GeneTree" id="ENSGT01130000278339"/>
<dbReference type="OrthoDB" id="9835842at2759"/>
<dbReference type="Proteomes" id="UP000694395">
    <property type="component" value="Chromosome 12"/>
</dbReference>
<dbReference type="GO" id="GO:0005886">
    <property type="term" value="C:plasma membrane"/>
    <property type="evidence" value="ECO:0007669"/>
    <property type="project" value="UniProtKB-SubCell"/>
</dbReference>
<dbReference type="GO" id="GO:0004878">
    <property type="term" value="F:complement component C5a receptor activity"/>
    <property type="evidence" value="ECO:0007669"/>
    <property type="project" value="TreeGrafter"/>
</dbReference>
<dbReference type="GO" id="GO:0004930">
    <property type="term" value="F:G protein-coupled receptor activity"/>
    <property type="evidence" value="ECO:0007669"/>
    <property type="project" value="UniProtKB-KW"/>
</dbReference>
<dbReference type="GO" id="GO:0006935">
    <property type="term" value="P:chemotaxis"/>
    <property type="evidence" value="ECO:0007669"/>
    <property type="project" value="UniProtKB-KW"/>
</dbReference>
<dbReference type="GO" id="GO:0006954">
    <property type="term" value="P:inflammatory response"/>
    <property type="evidence" value="ECO:0007669"/>
    <property type="project" value="TreeGrafter"/>
</dbReference>
<dbReference type="GO" id="GO:0007200">
    <property type="term" value="P:phospholipase C-activating G protein-coupled receptor signaling pathway"/>
    <property type="evidence" value="ECO:0007669"/>
    <property type="project" value="TreeGrafter"/>
</dbReference>
<dbReference type="GO" id="GO:0007204">
    <property type="term" value="P:positive regulation of cytosolic calcium ion concentration"/>
    <property type="evidence" value="ECO:0007669"/>
    <property type="project" value="TreeGrafter"/>
</dbReference>
<dbReference type="CDD" id="cd15115">
    <property type="entry name" value="7tmA_C3aR"/>
    <property type="match status" value="1"/>
</dbReference>
<dbReference type="FunFam" id="1.20.1070.10:FF:000034">
    <property type="entry name" value="G-protein coupled receptor 1"/>
    <property type="match status" value="1"/>
</dbReference>
<dbReference type="Gene3D" id="1.20.1070.10">
    <property type="entry name" value="Rhodopsin 7-helix transmembrane proteins"/>
    <property type="match status" value="1"/>
</dbReference>
<dbReference type="InterPro" id="IPR000826">
    <property type="entry name" value="Formyl_rcpt-rel"/>
</dbReference>
<dbReference type="InterPro" id="IPR000276">
    <property type="entry name" value="GPCR_Rhodpsn"/>
</dbReference>
<dbReference type="InterPro" id="IPR017452">
    <property type="entry name" value="GPCR_Rhodpsn_7TM"/>
</dbReference>
<dbReference type="PANTHER" id="PTHR24225:SF29">
    <property type="entry name" value="C5A ANAPHYLATOXIN CHEMOTACTIC RECEPTOR 1"/>
    <property type="match status" value="1"/>
</dbReference>
<dbReference type="PANTHER" id="PTHR24225">
    <property type="entry name" value="CHEMOTACTIC RECEPTOR"/>
    <property type="match status" value="1"/>
</dbReference>
<dbReference type="Pfam" id="PF00001">
    <property type="entry name" value="7tm_1"/>
    <property type="match status" value="1"/>
</dbReference>
<dbReference type="PRINTS" id="PR00526">
    <property type="entry name" value="FMETLEUPHER"/>
</dbReference>
<dbReference type="PRINTS" id="PR00237">
    <property type="entry name" value="GPCRRHODOPSN"/>
</dbReference>
<dbReference type="SUPFAM" id="SSF81321">
    <property type="entry name" value="Family A G protein-coupled receptor-like"/>
    <property type="match status" value="1"/>
</dbReference>
<dbReference type="PROSITE" id="PS00237">
    <property type="entry name" value="G_PROTEIN_RECEP_F1_1"/>
    <property type="match status" value="1"/>
</dbReference>
<dbReference type="PROSITE" id="PS50262">
    <property type="entry name" value="G_PROTEIN_RECEP_F1_2"/>
    <property type="match status" value="1"/>
</dbReference>
<sequence length="364" mass="40960">MGDNMDFSEHYGNFSENYVTESYGEFDLYYDPLNETSLSEQGHRSIWVLSIVLCSIACVLGITGNAFVIWIAGVKMKRTVNTIWFVNLAAADLLCCVSIPFSIADIILNSHWPYGEAMCKILPSMVVLNMFASVFTLVLISLDRFALVILPVWAQNHRSITLAWLLCGLVWVLGLLLSLPSMIYREIVVHDDMNITLCIYNHLQDKTEGNQSAIKAIHVTRLILGFLIPLLVIAVCYLLIGRRVSSGRFKSQRAFQIILVVVTTFFVCWLPYHVIGLVIEYGKEASQVMARALDPLAISLAYVNSCLNPVLYVFMGQDFKERVRVSLRKIFEKVFSEDVTLRSSVYSKGQSQLSRATNSSEAQV</sequence>
<organism>
    <name type="scientific">Oncorhynchus mykiss</name>
    <name type="common">Rainbow trout</name>
    <name type="synonym">Salmo gairdneri</name>
    <dbReference type="NCBI Taxonomy" id="8022"/>
    <lineage>
        <taxon>Eukaryota</taxon>
        <taxon>Metazoa</taxon>
        <taxon>Chordata</taxon>
        <taxon>Craniata</taxon>
        <taxon>Vertebrata</taxon>
        <taxon>Euteleostomi</taxon>
        <taxon>Actinopterygii</taxon>
        <taxon>Neopterygii</taxon>
        <taxon>Teleostei</taxon>
        <taxon>Protacanthopterygii</taxon>
        <taxon>Salmoniformes</taxon>
        <taxon>Salmonidae</taxon>
        <taxon>Salmoninae</taxon>
        <taxon>Oncorhynchus</taxon>
    </lineage>
</organism>
<gene>
    <name type="primary">c3ar1</name>
</gene>
<accession>Q2WED0</accession>
<feature type="chain" id="PRO_0000343794" description="C3a anaphylatoxin chemotactic receptor">
    <location>
        <begin position="1"/>
        <end position="364"/>
    </location>
</feature>
<feature type="topological domain" description="Extracellular" evidence="2">
    <location>
        <begin position="1"/>
        <end position="50"/>
    </location>
</feature>
<feature type="transmembrane region" description="Helical; Name=1" evidence="2">
    <location>
        <begin position="51"/>
        <end position="71"/>
    </location>
</feature>
<feature type="topological domain" description="Cytoplasmic" evidence="2">
    <location>
        <begin position="72"/>
        <end position="82"/>
    </location>
</feature>
<feature type="transmembrane region" description="Helical; Name=2" evidence="2">
    <location>
        <begin position="83"/>
        <end position="103"/>
    </location>
</feature>
<feature type="topological domain" description="Extracellular" evidence="2">
    <location>
        <begin position="104"/>
        <end position="120"/>
    </location>
</feature>
<feature type="transmembrane region" description="Helical; Name=3" evidence="2">
    <location>
        <begin position="121"/>
        <end position="141"/>
    </location>
</feature>
<feature type="topological domain" description="Cytoplasmic" evidence="2">
    <location>
        <begin position="142"/>
        <end position="159"/>
    </location>
</feature>
<feature type="transmembrane region" description="Helical; Name=4" evidence="2">
    <location>
        <begin position="160"/>
        <end position="180"/>
    </location>
</feature>
<feature type="topological domain" description="Extracellular" evidence="2">
    <location>
        <begin position="181"/>
        <end position="220"/>
    </location>
</feature>
<feature type="transmembrane region" description="Helical; Name=5" evidence="2">
    <location>
        <begin position="221"/>
        <end position="241"/>
    </location>
</feature>
<feature type="topological domain" description="Cytoplasmic" evidence="2">
    <location>
        <begin position="242"/>
        <end position="256"/>
    </location>
</feature>
<feature type="transmembrane region" description="Helical; Name=6" evidence="2">
    <location>
        <begin position="257"/>
        <end position="277"/>
    </location>
</feature>
<feature type="topological domain" description="Extracellular" evidence="2">
    <location>
        <begin position="278"/>
        <end position="295"/>
    </location>
</feature>
<feature type="transmembrane region" description="Helical; Name=7" evidence="2">
    <location>
        <begin position="296"/>
        <end position="316"/>
    </location>
</feature>
<feature type="topological domain" description="Cytoplasmic" evidence="2">
    <location>
        <begin position="317"/>
        <end position="364"/>
    </location>
</feature>
<feature type="glycosylation site" description="N-linked (GlcNAc...) asparagine" evidence="2">
    <location>
        <position position="13"/>
    </location>
</feature>
<feature type="glycosylation site" description="N-linked (GlcNAc...) asparagine" evidence="2">
    <location>
        <position position="34"/>
    </location>
</feature>
<feature type="disulfide bond" evidence="3">
    <location>
        <begin position="119"/>
        <end position="198"/>
    </location>
</feature>